<feature type="chain" id="PRO_0000129054" description="Guanidine hydrolase-activating protein A">
    <location>
        <begin position="1"/>
        <end position="120"/>
    </location>
</feature>
<feature type="binding site" evidence="1">
    <location>
        <position position="2"/>
    </location>
    <ligand>
        <name>Ni(2+)</name>
        <dbReference type="ChEBI" id="CHEBI:49786"/>
    </ligand>
</feature>
<feature type="binding site" evidence="1">
    <location>
        <position position="3"/>
    </location>
    <ligand>
        <name>Ni(2+)</name>
        <dbReference type="ChEBI" id="CHEBI:49786"/>
    </ligand>
</feature>
<feature type="binding site" evidence="1">
    <location>
        <position position="41"/>
    </location>
    <ligand>
        <name>Ni(2+)</name>
        <dbReference type="ChEBI" id="CHEBI:49786"/>
    </ligand>
</feature>
<feature type="binding site" evidence="1">
    <location>
        <position position="74"/>
    </location>
    <ligand>
        <name>Zn(2+)</name>
        <dbReference type="ChEBI" id="CHEBI:29105"/>
    </ligand>
</feature>
<feature type="binding site" evidence="1">
    <location>
        <position position="77"/>
    </location>
    <ligand>
        <name>Zn(2+)</name>
        <dbReference type="ChEBI" id="CHEBI:29105"/>
    </ligand>
</feature>
<feature type="binding site" evidence="1">
    <location>
        <position position="91"/>
    </location>
    <ligand>
        <name>Zn(2+)</name>
        <dbReference type="ChEBI" id="CHEBI:29105"/>
    </ligand>
</feature>
<feature type="binding site" evidence="1">
    <location>
        <position position="94"/>
    </location>
    <ligand>
        <name>Zn(2+)</name>
        <dbReference type="ChEBI" id="CHEBI:29105"/>
    </ligand>
</feature>
<reference key="1">
    <citation type="journal article" date="1996" name="DNA Res.">
        <title>Sequence analysis of the genome of the unicellular cyanobacterium Synechocystis sp. strain PCC6803. II. Sequence determination of the entire genome and assignment of potential protein-coding regions.</title>
        <authorList>
            <person name="Kaneko T."/>
            <person name="Sato S."/>
            <person name="Kotani H."/>
            <person name="Tanaka A."/>
            <person name="Asamizu E."/>
            <person name="Nakamura Y."/>
            <person name="Miyajima N."/>
            <person name="Hirosawa M."/>
            <person name="Sugiura M."/>
            <person name="Sasamoto S."/>
            <person name="Kimura T."/>
            <person name="Hosouchi T."/>
            <person name="Matsuno A."/>
            <person name="Muraki A."/>
            <person name="Nakazaki N."/>
            <person name="Naruo K."/>
            <person name="Okumura S."/>
            <person name="Shimpo S."/>
            <person name="Takeuchi C."/>
            <person name="Wada T."/>
            <person name="Watanabe A."/>
            <person name="Yamada M."/>
            <person name="Yasuda M."/>
            <person name="Tabata S."/>
        </authorList>
    </citation>
    <scope>NUCLEOTIDE SEQUENCE [LARGE SCALE GENOMIC DNA]</scope>
    <source>
        <strain>ATCC 27184 / PCC 6803 / Kazusa</strain>
    </source>
</reference>
<reference key="2">
    <citation type="journal article" date="2006" name="FEBS J.">
        <title>Mutagenesis of hydrogenase accessory genes of Synechocystis sp. PCC 6803. Additional homologues of hypA and hypB are not active in hydrogenase maturation.</title>
        <authorList>
            <person name="Hoffmann D."/>
            <person name="Gutekunst K."/>
            <person name="Klissenbauer M."/>
            <person name="Schulz-Friedrich R."/>
            <person name="Appel J."/>
        </authorList>
    </citation>
    <scope>DISRUPTION PHENOTYPE</scope>
    <source>
        <strain>ATCC 27184 / PCC 6803 / Kazusa</strain>
    </source>
</reference>
<reference key="3">
    <citation type="journal article" date="2022" name="Nature">
        <title>Discovery of a Ni2+-dependent guanidine hydrolase in bacteria.</title>
        <authorList>
            <person name="Funck D."/>
            <person name="Sinn M."/>
            <person name="Fleming J.R."/>
            <person name="Stanoppi M."/>
            <person name="Dietrich J."/>
            <person name="Lopez-Igual R."/>
            <person name="Mayans O."/>
            <person name="Hartig J.S."/>
        </authorList>
    </citation>
    <scope>FUNCTION IN THE MATURATION OF GUANIDINE HYDROLASE</scope>
    <source>
        <strain>ATCC 27184 / PCC 6803 / Kazusa</strain>
    </source>
</reference>
<name>GHAA_SYNY3</name>
<organism>
    <name type="scientific">Synechocystis sp. (strain ATCC 27184 / PCC 6803 / Kazusa)</name>
    <dbReference type="NCBI Taxonomy" id="1111708"/>
    <lineage>
        <taxon>Bacteria</taxon>
        <taxon>Bacillati</taxon>
        <taxon>Cyanobacteriota</taxon>
        <taxon>Cyanophyceae</taxon>
        <taxon>Synechococcales</taxon>
        <taxon>Merismopediaceae</taxon>
        <taxon>Synechocystis</taxon>
    </lineage>
</organism>
<accession>P73269</accession>
<protein>
    <recommendedName>
        <fullName evidence="5">Guanidine hydrolase-activating protein A</fullName>
    </recommendedName>
    <alternativeName>
        <fullName evidence="6">Guanidine hydrolase maturation factor GhaA</fullName>
    </alternativeName>
    <alternativeName>
        <fullName evidence="5">Ni(2+)-delivery protein GhaA</fullName>
    </alternativeName>
</protein>
<evidence type="ECO:0000250" key="1">
    <source>
        <dbReference type="UniProtKB" id="P0A0U4"/>
    </source>
</evidence>
<evidence type="ECO:0000269" key="2">
    <source>
    </source>
</evidence>
<evidence type="ECO:0000269" key="3">
    <source>
    </source>
</evidence>
<evidence type="ECO:0000303" key="4">
    <source>
    </source>
</evidence>
<evidence type="ECO:0000303" key="5">
    <source>
    </source>
</evidence>
<evidence type="ECO:0000305" key="6"/>
<evidence type="ECO:0000312" key="7">
    <source>
        <dbReference type="EMBL" id="BAA17297.1"/>
    </source>
</evidence>
<sequence length="120" mass="13785">MHETDMTKALIMTIQDWFDQQVEKPQITKIHLLVGQFTCVEPVSLQFAFEVQTKQTFLNGAELVIKDVPLVAYCHTCQTEYSPEIGLQYSCPTCRSPMDDIRSGRELKIDRIEHHQCTPA</sequence>
<comment type="function">
    <text evidence="3">Involved in the maturation of the nickel-dependent guanidine hydrolase GdmH (PubMed:35264792). Required for nickel insertion into the metal center of GdmH (PubMed:35264792). Seems to be required only for GdmH activation and not for activity (PubMed:35264792).</text>
</comment>
<comment type="disruption phenotype">
    <text evidence="2">Disruption of the gene has no effect on hydrogenase activity or urease activity.</text>
</comment>
<comment type="similarity">
    <text evidence="6">Belongs to the HypA/HybF family.</text>
</comment>
<gene>
    <name evidence="5" type="primary">ghaA</name>
    <name evidence="4" type="synonym">hypA2</name>
    <name evidence="7" type="ordered locus">sll1078</name>
</gene>
<dbReference type="EMBL" id="BA000022">
    <property type="protein sequence ID" value="BAA17297.1"/>
    <property type="molecule type" value="Genomic_DNA"/>
</dbReference>
<dbReference type="PIR" id="S77450">
    <property type="entry name" value="S77450"/>
</dbReference>
<dbReference type="SMR" id="P73269"/>
<dbReference type="STRING" id="1148.gene:10498160"/>
<dbReference type="PaxDb" id="1148-1652375"/>
<dbReference type="EnsemblBacteria" id="BAA17297">
    <property type="protein sequence ID" value="BAA17297"/>
    <property type="gene ID" value="BAA17297"/>
</dbReference>
<dbReference type="KEGG" id="syn:sll1078"/>
<dbReference type="eggNOG" id="COG0375">
    <property type="taxonomic scope" value="Bacteria"/>
</dbReference>
<dbReference type="InParanoid" id="P73269"/>
<dbReference type="PhylomeDB" id="P73269"/>
<dbReference type="Proteomes" id="UP000001425">
    <property type="component" value="Chromosome"/>
</dbReference>
<dbReference type="GO" id="GO:0016151">
    <property type="term" value="F:nickel cation binding"/>
    <property type="evidence" value="ECO:0000318"/>
    <property type="project" value="GO_Central"/>
</dbReference>
<dbReference type="GO" id="GO:0008270">
    <property type="term" value="F:zinc ion binding"/>
    <property type="evidence" value="ECO:0000318"/>
    <property type="project" value="GO_Central"/>
</dbReference>
<dbReference type="GO" id="GO:0051604">
    <property type="term" value="P:protein maturation"/>
    <property type="evidence" value="ECO:0000318"/>
    <property type="project" value="GO_Central"/>
</dbReference>
<dbReference type="GO" id="GO:0036211">
    <property type="term" value="P:protein modification process"/>
    <property type="evidence" value="ECO:0007669"/>
    <property type="project" value="UniProtKB-UniRule"/>
</dbReference>
<dbReference type="Gene3D" id="3.30.2320.80">
    <property type="match status" value="1"/>
</dbReference>
<dbReference type="HAMAP" id="MF_00213">
    <property type="entry name" value="HypA_HybF"/>
    <property type="match status" value="1"/>
</dbReference>
<dbReference type="InterPro" id="IPR020538">
    <property type="entry name" value="Hydgase_Ni_incorp_HypA/HybF_CS"/>
</dbReference>
<dbReference type="InterPro" id="IPR000688">
    <property type="entry name" value="HypA/HybF"/>
</dbReference>
<dbReference type="NCBIfam" id="TIGR00100">
    <property type="entry name" value="hypA"/>
    <property type="match status" value="1"/>
</dbReference>
<dbReference type="PANTHER" id="PTHR34535">
    <property type="entry name" value="HYDROGENASE MATURATION FACTOR HYPA"/>
    <property type="match status" value="1"/>
</dbReference>
<dbReference type="PANTHER" id="PTHR34535:SF3">
    <property type="entry name" value="HYDROGENASE MATURATION FACTOR HYPA"/>
    <property type="match status" value="1"/>
</dbReference>
<dbReference type="Pfam" id="PF01155">
    <property type="entry name" value="HypA"/>
    <property type="match status" value="1"/>
</dbReference>
<dbReference type="PIRSF" id="PIRSF004761">
    <property type="entry name" value="Hydrgn_mat_HypA"/>
    <property type="match status" value="1"/>
</dbReference>
<dbReference type="PROSITE" id="PS01249">
    <property type="entry name" value="HYPA"/>
    <property type="match status" value="1"/>
</dbReference>
<proteinExistence type="evidence at protein level"/>
<keyword id="KW-0479">Metal-binding</keyword>
<keyword id="KW-0533">Nickel</keyword>
<keyword id="KW-1185">Reference proteome</keyword>
<keyword id="KW-0862">Zinc</keyword>